<protein>
    <recommendedName>
        <fullName evidence="1">tRNA-specific 2-thiouridylase MnmA</fullName>
        <ecNumber evidence="1">2.8.1.13</ecNumber>
    </recommendedName>
</protein>
<feature type="chain" id="PRO_1000096285" description="tRNA-specific 2-thiouridylase MnmA">
    <location>
        <begin position="1"/>
        <end position="354"/>
    </location>
</feature>
<feature type="region of interest" description="Interaction with tRNA" evidence="1">
    <location>
        <begin position="145"/>
        <end position="147"/>
    </location>
</feature>
<feature type="active site" description="Nucleophile" evidence="1">
    <location>
        <position position="100"/>
    </location>
</feature>
<feature type="active site" description="Cysteine persulfide intermediate" evidence="1">
    <location>
        <position position="195"/>
    </location>
</feature>
<feature type="binding site" evidence="1">
    <location>
        <begin position="6"/>
        <end position="13"/>
    </location>
    <ligand>
        <name>ATP</name>
        <dbReference type="ChEBI" id="CHEBI:30616"/>
    </ligand>
</feature>
<feature type="binding site" evidence="1">
    <location>
        <position position="33"/>
    </location>
    <ligand>
        <name>ATP</name>
        <dbReference type="ChEBI" id="CHEBI:30616"/>
    </ligand>
</feature>
<feature type="binding site" evidence="1">
    <location>
        <position position="123"/>
    </location>
    <ligand>
        <name>ATP</name>
        <dbReference type="ChEBI" id="CHEBI:30616"/>
    </ligand>
</feature>
<feature type="site" description="Interaction with tRNA" evidence="1">
    <location>
        <position position="124"/>
    </location>
</feature>
<feature type="site" description="Interaction with tRNA" evidence="1">
    <location>
        <position position="333"/>
    </location>
</feature>
<feature type="disulfide bond" description="Alternate" evidence="1">
    <location>
        <begin position="100"/>
        <end position="195"/>
    </location>
</feature>
<keyword id="KW-0067">ATP-binding</keyword>
<keyword id="KW-0963">Cytoplasm</keyword>
<keyword id="KW-1015">Disulfide bond</keyword>
<keyword id="KW-0547">Nucleotide-binding</keyword>
<keyword id="KW-0694">RNA-binding</keyword>
<keyword id="KW-0808">Transferase</keyword>
<keyword id="KW-0819">tRNA processing</keyword>
<keyword id="KW-0820">tRNA-binding</keyword>
<comment type="function">
    <text evidence="1">Catalyzes the 2-thiolation of uridine at the wobble position (U34) of tRNA, leading to the formation of s(2)U34.</text>
</comment>
<comment type="catalytic activity">
    <reaction evidence="1">
        <text>S-sulfanyl-L-cysteinyl-[protein] + uridine(34) in tRNA + AH2 + ATP = 2-thiouridine(34) in tRNA + L-cysteinyl-[protein] + A + AMP + diphosphate + H(+)</text>
        <dbReference type="Rhea" id="RHEA:47032"/>
        <dbReference type="Rhea" id="RHEA-COMP:10131"/>
        <dbReference type="Rhea" id="RHEA-COMP:11726"/>
        <dbReference type="Rhea" id="RHEA-COMP:11727"/>
        <dbReference type="Rhea" id="RHEA-COMP:11728"/>
        <dbReference type="ChEBI" id="CHEBI:13193"/>
        <dbReference type="ChEBI" id="CHEBI:15378"/>
        <dbReference type="ChEBI" id="CHEBI:17499"/>
        <dbReference type="ChEBI" id="CHEBI:29950"/>
        <dbReference type="ChEBI" id="CHEBI:30616"/>
        <dbReference type="ChEBI" id="CHEBI:33019"/>
        <dbReference type="ChEBI" id="CHEBI:61963"/>
        <dbReference type="ChEBI" id="CHEBI:65315"/>
        <dbReference type="ChEBI" id="CHEBI:87170"/>
        <dbReference type="ChEBI" id="CHEBI:456215"/>
        <dbReference type="EC" id="2.8.1.13"/>
    </reaction>
</comment>
<comment type="subcellular location">
    <subcellularLocation>
        <location evidence="1">Cytoplasm</location>
    </subcellularLocation>
</comment>
<comment type="similarity">
    <text evidence="1">Belongs to the MnmA/TRMU family.</text>
</comment>
<accession>B5RQ24</accession>
<gene>
    <name evidence="1" type="primary">mnmA</name>
    <name type="ordered locus">BRE_688</name>
</gene>
<sequence>MKIAILLSGGVDSSVALYTMIQKGYKNIKCYYLKIWLEDELSYIGECPWKEDITYVDSVCKKFNVPYKIINLQEEYYNRVVTYAIEELKMGNTPSPDIFCNQRIKFGAFFEKINEKYDLIVTGHYAKIENKNNSYTLKQAKDKIKDQSYFLSHLSKKQISKLHFPLGDLLKSEIRQIAHEIDLPNKNRKDSQGICFLGKIKYNEFIKYHLGELKGNIIEQETGKILGTHNGYWFFTIGQRKGIKLSHGPWFVTEKDIQNNIIYISNSTNYLKQGKEQFLVHKTNWINKPLKNNNLSAKIRHGEKKIKCKIETLKDEIIRVNLEEKDYGISPGQFCIFYKEDECLGGAKILKTLI</sequence>
<proteinExistence type="inferred from homology"/>
<evidence type="ECO:0000255" key="1">
    <source>
        <dbReference type="HAMAP-Rule" id="MF_00144"/>
    </source>
</evidence>
<dbReference type="EC" id="2.8.1.13" evidence="1"/>
<dbReference type="EMBL" id="CP000993">
    <property type="protein sequence ID" value="ACH94908.1"/>
    <property type="molecule type" value="Genomic_DNA"/>
</dbReference>
<dbReference type="RefSeq" id="WP_012539089.1">
    <property type="nucleotide sequence ID" value="NC_011244.1"/>
</dbReference>
<dbReference type="SMR" id="B5RQ24"/>
<dbReference type="KEGG" id="bre:BRE_688"/>
<dbReference type="HOGENOM" id="CLU_035188_1_2_12"/>
<dbReference type="Proteomes" id="UP000000612">
    <property type="component" value="Chromosome"/>
</dbReference>
<dbReference type="GO" id="GO:0005737">
    <property type="term" value="C:cytoplasm"/>
    <property type="evidence" value="ECO:0007669"/>
    <property type="project" value="UniProtKB-SubCell"/>
</dbReference>
<dbReference type="GO" id="GO:0005524">
    <property type="term" value="F:ATP binding"/>
    <property type="evidence" value="ECO:0007669"/>
    <property type="project" value="UniProtKB-KW"/>
</dbReference>
<dbReference type="GO" id="GO:0000049">
    <property type="term" value="F:tRNA binding"/>
    <property type="evidence" value="ECO:0007669"/>
    <property type="project" value="UniProtKB-KW"/>
</dbReference>
<dbReference type="GO" id="GO:0103016">
    <property type="term" value="F:tRNA-uridine 2-sulfurtransferase activity"/>
    <property type="evidence" value="ECO:0007669"/>
    <property type="project" value="UniProtKB-EC"/>
</dbReference>
<dbReference type="GO" id="GO:0006400">
    <property type="term" value="P:tRNA modification"/>
    <property type="evidence" value="ECO:0007669"/>
    <property type="project" value="UniProtKB-UniRule"/>
</dbReference>
<dbReference type="CDD" id="cd01998">
    <property type="entry name" value="MnmA_TRMU-like"/>
    <property type="match status" value="1"/>
</dbReference>
<dbReference type="FunFam" id="2.30.30.280:FF:000001">
    <property type="entry name" value="tRNA-specific 2-thiouridylase MnmA"/>
    <property type="match status" value="1"/>
</dbReference>
<dbReference type="Gene3D" id="2.30.30.280">
    <property type="entry name" value="Adenine nucleotide alpha hydrolases-like domains"/>
    <property type="match status" value="1"/>
</dbReference>
<dbReference type="Gene3D" id="3.40.50.620">
    <property type="entry name" value="HUPs"/>
    <property type="match status" value="1"/>
</dbReference>
<dbReference type="Gene3D" id="2.40.30.10">
    <property type="entry name" value="Translation factors"/>
    <property type="match status" value="1"/>
</dbReference>
<dbReference type="HAMAP" id="MF_00144">
    <property type="entry name" value="tRNA_thiouridyl_MnmA"/>
    <property type="match status" value="1"/>
</dbReference>
<dbReference type="InterPro" id="IPR004506">
    <property type="entry name" value="MnmA-like"/>
</dbReference>
<dbReference type="InterPro" id="IPR046885">
    <property type="entry name" value="MnmA-like_C"/>
</dbReference>
<dbReference type="InterPro" id="IPR046884">
    <property type="entry name" value="MnmA-like_central"/>
</dbReference>
<dbReference type="InterPro" id="IPR023382">
    <property type="entry name" value="MnmA-like_central_sf"/>
</dbReference>
<dbReference type="InterPro" id="IPR014729">
    <property type="entry name" value="Rossmann-like_a/b/a_fold"/>
</dbReference>
<dbReference type="InterPro" id="IPR051305">
    <property type="entry name" value="tRNA_2-thiouridylase_MnmA"/>
</dbReference>
<dbReference type="NCBIfam" id="NF001138">
    <property type="entry name" value="PRK00143.1"/>
    <property type="match status" value="1"/>
</dbReference>
<dbReference type="NCBIfam" id="TIGR00420">
    <property type="entry name" value="trmU"/>
    <property type="match status" value="1"/>
</dbReference>
<dbReference type="PANTHER" id="PTHR43052">
    <property type="match status" value="1"/>
</dbReference>
<dbReference type="PANTHER" id="PTHR43052:SF1">
    <property type="entry name" value="TRNA-5-TAURINOMETHYLURIDINE 2-SULFURTRANSFERASE"/>
    <property type="match status" value="1"/>
</dbReference>
<dbReference type="Pfam" id="PF03054">
    <property type="entry name" value="tRNA_Me_trans"/>
    <property type="match status" value="1"/>
</dbReference>
<dbReference type="Pfam" id="PF20258">
    <property type="entry name" value="tRNA_Me_trans_C"/>
    <property type="match status" value="1"/>
</dbReference>
<dbReference type="Pfam" id="PF20259">
    <property type="entry name" value="tRNA_Me_trans_M"/>
    <property type="match status" value="1"/>
</dbReference>
<dbReference type="SUPFAM" id="SSF52402">
    <property type="entry name" value="Adenine nucleotide alpha hydrolases-like"/>
    <property type="match status" value="1"/>
</dbReference>
<name>MNMA_BORRA</name>
<reference key="1">
    <citation type="journal article" date="2008" name="PLoS Genet.">
        <title>The genome of Borrelia recurrentis, the agent of deadly louse-borne relapsing fever, is a degraded subset of tick-borne Borrelia duttonii.</title>
        <authorList>
            <person name="Lescot M."/>
            <person name="Audic S."/>
            <person name="Robert C."/>
            <person name="Nguyen T.T."/>
            <person name="Blanc G."/>
            <person name="Cutler S.J."/>
            <person name="Wincker P."/>
            <person name="Couloux A."/>
            <person name="Claverie J.-M."/>
            <person name="Raoult D."/>
            <person name="Drancourt M."/>
        </authorList>
    </citation>
    <scope>NUCLEOTIDE SEQUENCE [LARGE SCALE GENOMIC DNA]</scope>
    <source>
        <strain>A1</strain>
    </source>
</reference>
<organism>
    <name type="scientific">Borrelia recurrentis (strain A1)</name>
    <dbReference type="NCBI Taxonomy" id="412418"/>
    <lineage>
        <taxon>Bacteria</taxon>
        <taxon>Pseudomonadati</taxon>
        <taxon>Spirochaetota</taxon>
        <taxon>Spirochaetia</taxon>
        <taxon>Spirochaetales</taxon>
        <taxon>Borreliaceae</taxon>
        <taxon>Borrelia</taxon>
    </lineage>
</organism>